<name>SERCL_ARATH</name>
<gene>
    <name type="primary">IPSP</name>
    <name type="ordered locus">At5g04120</name>
    <name type="ORF">F21E1.40</name>
</gene>
<feature type="chain" id="PRO_0000430239" description="Metal-independent phosphoserine phosphatase">
    <location>
        <begin position="1"/>
        <end position="238"/>
    </location>
</feature>
<feature type="active site" description="Tele-phosphohistidine intermediate" evidence="1">
    <location>
        <position position="32"/>
    </location>
</feature>
<feature type="active site" description="Proton donor/acceptor" evidence="1">
    <location>
        <position position="107"/>
    </location>
</feature>
<feature type="site" description="Transition state stabilizer" evidence="1">
    <location>
        <position position="176"/>
    </location>
</feature>
<organism>
    <name type="scientific">Arabidopsis thaliana</name>
    <name type="common">Mouse-ear cress</name>
    <dbReference type="NCBI Taxonomy" id="3702"/>
    <lineage>
        <taxon>Eukaryota</taxon>
        <taxon>Viridiplantae</taxon>
        <taxon>Streptophyta</taxon>
        <taxon>Embryophyta</taxon>
        <taxon>Tracheophyta</taxon>
        <taxon>Spermatophyta</taxon>
        <taxon>Magnoliopsida</taxon>
        <taxon>eudicotyledons</taxon>
        <taxon>Gunneridae</taxon>
        <taxon>Pentapetalae</taxon>
        <taxon>rosids</taxon>
        <taxon>malvids</taxon>
        <taxon>Brassicales</taxon>
        <taxon>Brassicaceae</taxon>
        <taxon>Camelineae</taxon>
        <taxon>Arabidopsis</taxon>
    </lineage>
</organism>
<sequence>MGHEWIDAEREFKWSEDVKVESEVTEIVLVRHGETTWNAAGRIQGQIESDLNEVGLKQAVAIAERLGKEERPVAVYSSDLKRAKDTALMIAKTCFCPEVIEVPDLKERHVGSLQGLYWKEGAEKEPEAYSAFFSSQNDLEIPGGGESFDQLADRSMDALEQIAKKHKGERVIVVTHGGVLRAIYLRITQASSAGKLLNASVNVVHLRDQKWIIDSWSDVSHLSSVGFLQRGFDGDAKP</sequence>
<reference key="1">
    <citation type="journal article" date="2012" name="J. Biol. Chem.">
        <title>Discovery and analysis of cofactor-dependent phosphoglycerate mutase homologs as novel phosphoserine phosphatases in Hydrogenobacter thermophilus.</title>
        <authorList>
            <person name="Chiba Y."/>
            <person name="Oshima K."/>
            <person name="Arai H."/>
            <person name="Ishii M."/>
            <person name="Igarashi Y."/>
        </authorList>
    </citation>
    <scope>NUCLEOTIDE SEQUENCE [MRNA]</scope>
    <scope>FUNCTION</scope>
    <scope>CATALYTIC ACTIVITY</scope>
    <scope>BIOPHYSICOCHEMICAL PROPERTIES</scope>
</reference>
<reference key="2">
    <citation type="journal article" date="2000" name="Nature">
        <title>Sequence and analysis of chromosome 5 of the plant Arabidopsis thaliana.</title>
        <authorList>
            <person name="Tabata S."/>
            <person name="Kaneko T."/>
            <person name="Nakamura Y."/>
            <person name="Kotani H."/>
            <person name="Kato T."/>
            <person name="Asamizu E."/>
            <person name="Miyajima N."/>
            <person name="Sasamoto S."/>
            <person name="Kimura T."/>
            <person name="Hosouchi T."/>
            <person name="Kawashima K."/>
            <person name="Kohara M."/>
            <person name="Matsumoto M."/>
            <person name="Matsuno A."/>
            <person name="Muraki A."/>
            <person name="Nakayama S."/>
            <person name="Nakazaki N."/>
            <person name="Naruo K."/>
            <person name="Okumura S."/>
            <person name="Shinpo S."/>
            <person name="Takeuchi C."/>
            <person name="Wada T."/>
            <person name="Watanabe A."/>
            <person name="Yamada M."/>
            <person name="Yasuda M."/>
            <person name="Sato S."/>
            <person name="de la Bastide M."/>
            <person name="Huang E."/>
            <person name="Spiegel L."/>
            <person name="Gnoj L."/>
            <person name="O'Shaughnessy A."/>
            <person name="Preston R."/>
            <person name="Habermann K."/>
            <person name="Murray J."/>
            <person name="Johnson D."/>
            <person name="Rohlfing T."/>
            <person name="Nelson J."/>
            <person name="Stoneking T."/>
            <person name="Pepin K."/>
            <person name="Spieth J."/>
            <person name="Sekhon M."/>
            <person name="Armstrong J."/>
            <person name="Becker M."/>
            <person name="Belter E."/>
            <person name="Cordum H."/>
            <person name="Cordes M."/>
            <person name="Courtney L."/>
            <person name="Courtney W."/>
            <person name="Dante M."/>
            <person name="Du H."/>
            <person name="Edwards J."/>
            <person name="Fryman J."/>
            <person name="Haakensen B."/>
            <person name="Lamar E."/>
            <person name="Latreille P."/>
            <person name="Leonard S."/>
            <person name="Meyer R."/>
            <person name="Mulvaney E."/>
            <person name="Ozersky P."/>
            <person name="Riley A."/>
            <person name="Strowmatt C."/>
            <person name="Wagner-McPherson C."/>
            <person name="Wollam A."/>
            <person name="Yoakum M."/>
            <person name="Bell M."/>
            <person name="Dedhia N."/>
            <person name="Parnell L."/>
            <person name="Shah R."/>
            <person name="Rodriguez M."/>
            <person name="Hoon See L."/>
            <person name="Vil D."/>
            <person name="Baker J."/>
            <person name="Kirchoff K."/>
            <person name="Toth K."/>
            <person name="King L."/>
            <person name="Bahret A."/>
            <person name="Miller B."/>
            <person name="Marra M.A."/>
            <person name="Martienssen R."/>
            <person name="McCombie W.R."/>
            <person name="Wilson R.K."/>
            <person name="Murphy G."/>
            <person name="Bancroft I."/>
            <person name="Volckaert G."/>
            <person name="Wambutt R."/>
            <person name="Duesterhoeft A."/>
            <person name="Stiekema W."/>
            <person name="Pohl T."/>
            <person name="Entian K.-D."/>
            <person name="Terryn N."/>
            <person name="Hartley N."/>
            <person name="Bent E."/>
            <person name="Johnson S."/>
            <person name="Langham S.-A."/>
            <person name="McCullagh B."/>
            <person name="Robben J."/>
            <person name="Grymonprez B."/>
            <person name="Zimmermann W."/>
            <person name="Ramsperger U."/>
            <person name="Wedler H."/>
            <person name="Balke K."/>
            <person name="Wedler E."/>
            <person name="Peters S."/>
            <person name="van Staveren M."/>
            <person name="Dirkse W."/>
            <person name="Mooijman P."/>
            <person name="Klein Lankhorst R."/>
            <person name="Weitzenegger T."/>
            <person name="Bothe G."/>
            <person name="Rose M."/>
            <person name="Hauf J."/>
            <person name="Berneiser S."/>
            <person name="Hempel S."/>
            <person name="Feldpausch M."/>
            <person name="Lamberth S."/>
            <person name="Villarroel R."/>
            <person name="Gielen J."/>
            <person name="Ardiles W."/>
            <person name="Bents O."/>
            <person name="Lemcke K."/>
            <person name="Kolesov G."/>
            <person name="Mayer K.F.X."/>
            <person name="Rudd S."/>
            <person name="Schoof H."/>
            <person name="Schueller C."/>
            <person name="Zaccaria P."/>
            <person name="Mewes H.-W."/>
            <person name="Bevan M."/>
            <person name="Fransz P.F."/>
        </authorList>
    </citation>
    <scope>NUCLEOTIDE SEQUENCE [LARGE SCALE GENOMIC DNA]</scope>
    <source>
        <strain>cv. Columbia</strain>
    </source>
</reference>
<reference key="3">
    <citation type="journal article" date="2017" name="Plant J.">
        <title>Araport11: a complete reannotation of the Arabidopsis thaliana reference genome.</title>
        <authorList>
            <person name="Cheng C.Y."/>
            <person name="Krishnakumar V."/>
            <person name="Chan A.P."/>
            <person name="Thibaud-Nissen F."/>
            <person name="Schobel S."/>
            <person name="Town C.D."/>
        </authorList>
    </citation>
    <scope>GENOME REANNOTATION</scope>
    <source>
        <strain>cv. Columbia</strain>
    </source>
</reference>
<reference key="4">
    <citation type="journal article" date="2002" name="Science">
        <title>Functional annotation of a full-length Arabidopsis cDNA collection.</title>
        <authorList>
            <person name="Seki M."/>
            <person name="Narusaka M."/>
            <person name="Kamiya A."/>
            <person name="Ishida J."/>
            <person name="Satou M."/>
            <person name="Sakurai T."/>
            <person name="Nakajima M."/>
            <person name="Enju A."/>
            <person name="Akiyama K."/>
            <person name="Oono Y."/>
            <person name="Muramatsu M."/>
            <person name="Hayashizaki Y."/>
            <person name="Kawai J."/>
            <person name="Carninci P."/>
            <person name="Itoh M."/>
            <person name="Ishii Y."/>
            <person name="Arakawa T."/>
            <person name="Shibata K."/>
            <person name="Shinagawa A."/>
            <person name="Shinozaki K."/>
        </authorList>
    </citation>
    <scope>NUCLEOTIDE SEQUENCE [LARGE SCALE MRNA] OF 70-238</scope>
    <source>
        <strain>cv. Columbia</strain>
    </source>
</reference>
<keyword id="KW-0378">Hydrolase</keyword>
<keyword id="KW-1185">Reference proteome</keyword>
<dbReference type="EC" id="3.1.3.3" evidence="2"/>
<dbReference type="EMBL" id="AL391716">
    <property type="protein sequence ID" value="CAC05494.1"/>
    <property type="status" value="ALT_SEQ"/>
    <property type="molecule type" value="Genomic_DNA"/>
</dbReference>
<dbReference type="EMBL" id="CP002688">
    <property type="protein sequence ID" value="AED90700.1"/>
    <property type="molecule type" value="Genomic_DNA"/>
</dbReference>
<dbReference type="EMBL" id="AK117579">
    <property type="protein sequence ID" value="BAC42237.1"/>
    <property type="status" value="ALT_INIT"/>
    <property type="molecule type" value="mRNA"/>
</dbReference>
<dbReference type="RefSeq" id="NP_196032.1">
    <property type="nucleotide sequence ID" value="NM_120494.4"/>
</dbReference>
<dbReference type="SMR" id="F4KI56"/>
<dbReference type="BioGRID" id="15570">
    <property type="interactions" value="1"/>
</dbReference>
<dbReference type="FunCoup" id="F4KI56">
    <property type="interactions" value="255"/>
</dbReference>
<dbReference type="STRING" id="3702.F4KI56"/>
<dbReference type="PaxDb" id="3702-AT5G04120.1"/>
<dbReference type="ProteomicsDB" id="232576"/>
<dbReference type="EnsemblPlants" id="AT5G04120.1">
    <property type="protein sequence ID" value="AT5G04120.1"/>
    <property type="gene ID" value="AT5G04120"/>
</dbReference>
<dbReference type="GeneID" id="830290"/>
<dbReference type="Gramene" id="AT5G04120.1">
    <property type="protein sequence ID" value="AT5G04120.1"/>
    <property type="gene ID" value="AT5G04120"/>
</dbReference>
<dbReference type="KEGG" id="ath:AT5G04120"/>
<dbReference type="Araport" id="AT5G04120"/>
<dbReference type="TAIR" id="AT5G04120"/>
<dbReference type="eggNOG" id="KOG0235">
    <property type="taxonomic scope" value="Eukaryota"/>
</dbReference>
<dbReference type="HOGENOM" id="CLU_033323_14_0_1"/>
<dbReference type="InParanoid" id="F4KI56"/>
<dbReference type="OMA" id="RNASKWD"/>
<dbReference type="OrthoDB" id="354304at2759"/>
<dbReference type="PRO" id="PR:F4KI56"/>
<dbReference type="Proteomes" id="UP000006548">
    <property type="component" value="Chromosome 5"/>
</dbReference>
<dbReference type="ExpressionAtlas" id="F4KI56">
    <property type="expression patterns" value="baseline and differential"/>
</dbReference>
<dbReference type="GO" id="GO:0036424">
    <property type="term" value="F:L-phosphoserine phosphatase activity"/>
    <property type="evidence" value="ECO:0000314"/>
    <property type="project" value="TAIR"/>
</dbReference>
<dbReference type="GO" id="GO:0070179">
    <property type="term" value="P:D-serine biosynthetic process"/>
    <property type="evidence" value="ECO:0000314"/>
    <property type="project" value="TAIR"/>
</dbReference>
<dbReference type="GO" id="GO:0006564">
    <property type="term" value="P:L-serine biosynthetic process"/>
    <property type="evidence" value="ECO:0000314"/>
    <property type="project" value="TAIR"/>
</dbReference>
<dbReference type="CDD" id="cd07067">
    <property type="entry name" value="HP_PGM_like"/>
    <property type="match status" value="1"/>
</dbReference>
<dbReference type="FunFam" id="3.40.50.1240:FF:000056">
    <property type="entry name" value="Metal-independent phosphoserine phosphatase"/>
    <property type="match status" value="1"/>
</dbReference>
<dbReference type="Gene3D" id="3.40.50.1240">
    <property type="entry name" value="Phosphoglycerate mutase-like"/>
    <property type="match status" value="1"/>
</dbReference>
<dbReference type="InterPro" id="IPR013078">
    <property type="entry name" value="His_Pase_superF_clade-1"/>
</dbReference>
<dbReference type="InterPro" id="IPR029033">
    <property type="entry name" value="His_PPase_superfam"/>
</dbReference>
<dbReference type="InterPro" id="IPR001345">
    <property type="entry name" value="PG/BPGM_mutase_AS"/>
</dbReference>
<dbReference type="InterPro" id="IPR050275">
    <property type="entry name" value="PGM_Phosphatase"/>
</dbReference>
<dbReference type="PANTHER" id="PTHR48100">
    <property type="entry name" value="BROAD-SPECIFICITY PHOSPHATASE YOR283W-RELATED"/>
    <property type="match status" value="1"/>
</dbReference>
<dbReference type="PANTHER" id="PTHR48100:SF44">
    <property type="entry name" value="PHOSPHATASE C1620.13-RELATED"/>
    <property type="match status" value="1"/>
</dbReference>
<dbReference type="Pfam" id="PF00300">
    <property type="entry name" value="His_Phos_1"/>
    <property type="match status" value="1"/>
</dbReference>
<dbReference type="SMART" id="SM00855">
    <property type="entry name" value="PGAM"/>
    <property type="match status" value="1"/>
</dbReference>
<dbReference type="SUPFAM" id="SSF53254">
    <property type="entry name" value="Phosphoglycerate mutase-like"/>
    <property type="match status" value="1"/>
</dbReference>
<dbReference type="PROSITE" id="PS00175">
    <property type="entry name" value="PG_MUTASE"/>
    <property type="match status" value="1"/>
</dbReference>
<proteinExistence type="evidence at protein level"/>
<protein>
    <recommendedName>
        <fullName>Metal-independent phosphoserine phosphatase</fullName>
        <shortName>iPSP</shortName>
        <ecNumber evidence="2">3.1.3.3</ecNumber>
    </recommendedName>
    <alternativeName>
        <fullName evidence="3">Phosphoglycerate mutase-like protein 3</fullName>
    </alternativeName>
</protein>
<evidence type="ECO:0000250" key="1">
    <source>
        <dbReference type="UniProtKB" id="P62707"/>
    </source>
</evidence>
<evidence type="ECO:0000269" key="2">
    <source>
    </source>
</evidence>
<evidence type="ECO:0000305" key="3"/>
<evidence type="ECO:0000305" key="4">
    <source>
    </source>
</evidence>
<comment type="function">
    <text evidence="2">Phosphoglycerate mutase-like protein lacking PGM activity, but having a low metal-independent phosphoserine phosphatase activity in vitro. May be involved in serine biosynthesis.</text>
</comment>
<comment type="catalytic activity">
    <reaction evidence="2">
        <text>O-phospho-L-serine + H2O = L-serine + phosphate</text>
        <dbReference type="Rhea" id="RHEA:21208"/>
        <dbReference type="ChEBI" id="CHEBI:15377"/>
        <dbReference type="ChEBI" id="CHEBI:33384"/>
        <dbReference type="ChEBI" id="CHEBI:43474"/>
        <dbReference type="ChEBI" id="CHEBI:57524"/>
        <dbReference type="EC" id="3.1.3.3"/>
    </reaction>
</comment>
<comment type="catalytic activity">
    <reaction evidence="2">
        <text>O-phospho-D-serine + H2O = D-serine + phosphate</text>
        <dbReference type="Rhea" id="RHEA:24873"/>
        <dbReference type="ChEBI" id="CHEBI:15377"/>
        <dbReference type="ChEBI" id="CHEBI:35247"/>
        <dbReference type="ChEBI" id="CHEBI:43474"/>
        <dbReference type="ChEBI" id="CHEBI:58680"/>
        <dbReference type="EC" id="3.1.3.3"/>
    </reaction>
</comment>
<comment type="biophysicochemical properties">
    <kinetics>
        <Vmax evidence="2">0.087 umol/min/mg enzyme toward L-phosphoserine</Vmax>
        <Vmax evidence="2">0.079 umol/min/mg enzyme toward D-phosphoserine</Vmax>
        <text>Measured in a reaction mixture containing 1 mM EDTA and no magnesium.</text>
    </kinetics>
</comment>
<comment type="similarity">
    <text evidence="3">Belongs to the phosphoglycerate mutase family.</text>
</comment>
<comment type="caution">
    <text evidence="4">The full-length coding region has been amplified by RT-PCR and sequenced, but not submitted to the EMBL/GenBank/DDBJ databases.</text>
</comment>
<comment type="sequence caution" evidence="3">
    <conflict type="erroneous initiation">
        <sequence resource="EMBL-CDS" id="BAC42237"/>
    </conflict>
    <text>Truncated N-terminus.</text>
</comment>
<comment type="sequence caution" evidence="3">
    <conflict type="erroneous gene model prediction">
        <sequence resource="EMBL-CDS" id="CAC05494"/>
    </conflict>
</comment>
<accession>F4KI56</accession>
<accession>Q8GYJ6</accession>
<accession>Q9FYE8</accession>